<sequence>MQVADKTVVIAGLGVSGTSLAEVLRERGTHVIGVDERKPEADLHSFDDVDWDHVDYVMSSPVFNPRTPFVLEAQRRGIPVMSEVEFAWQLRVNNERTGTPAPWIGITGTNGKTSTTEMTSEMLTACGLDAPTAGNIASGDMSMSLSRCATNPQHDVLCVELSSFQLHFTDSLALDCAAITNIADDHLDWHGGRENYAADKSKVFHNAKRAIVYNAQDAKVSELAAEAQTAEGCRKVGFTLEAPQAGQIGIEDGWIVDRSGVAGGAVGESVRLAAITDFTHLAEPDGSLYPHLVADALTALALVLGLGADRDTALKALTSFKPGGHRIETVAEAAVEGGSVRFVDDSKATNGHAARASLSSFPAKSVIWIAGGLAKGSRFEDLVKDQAHTIKAAVIIGKDQQPMIEAFASQAPDIPVTIIDPEDNDTVMDRAVEACGTYTAAGDIVLMAPACASMDQFKSYADRGNRFAAAAKTWSEVHGLH</sequence>
<protein>
    <recommendedName>
        <fullName evidence="1">UDP-N-acetylmuramoylalanine--D-glutamate ligase</fullName>
        <ecNumber evidence="1">6.3.2.9</ecNumber>
    </recommendedName>
    <alternativeName>
        <fullName evidence="1">D-glutamic acid-adding enzyme</fullName>
    </alternativeName>
    <alternativeName>
        <fullName evidence="1">UDP-N-acetylmuramoyl-L-alanyl-D-glutamate synthetase</fullName>
    </alternativeName>
</protein>
<gene>
    <name evidence="1" type="primary">murD</name>
    <name type="ordered locus">BLD_0179</name>
</gene>
<reference key="1">
    <citation type="journal article" date="2008" name="BMC Genomics">
        <title>Comparative genomic analysis of the gut bacterium Bifidobacterium longum reveals loci susceptible to deletion during pure culture growth.</title>
        <authorList>
            <person name="Lee J.H."/>
            <person name="Karamychev V.N."/>
            <person name="Kozyavkin S.A."/>
            <person name="Mills D."/>
            <person name="Pavlov A.R."/>
            <person name="Pavlova N.V."/>
            <person name="Polouchine N.N."/>
            <person name="Richardson P.M."/>
            <person name="Shakhova V.V."/>
            <person name="Slesarev A.I."/>
            <person name="Weimer B."/>
            <person name="O'Sullivan D.J."/>
        </authorList>
    </citation>
    <scope>NUCLEOTIDE SEQUENCE [LARGE SCALE GENOMIC DNA]</scope>
    <source>
        <strain>DJO10A</strain>
    </source>
</reference>
<feature type="chain" id="PRO_1000130830" description="UDP-N-acetylmuramoylalanine--D-glutamate ligase">
    <location>
        <begin position="1"/>
        <end position="481"/>
    </location>
</feature>
<feature type="binding site" evidence="1">
    <location>
        <begin position="108"/>
        <end position="114"/>
    </location>
    <ligand>
        <name>ATP</name>
        <dbReference type="ChEBI" id="CHEBI:30616"/>
    </ligand>
</feature>
<organism>
    <name type="scientific">Bifidobacterium longum (strain DJO10A)</name>
    <dbReference type="NCBI Taxonomy" id="205913"/>
    <lineage>
        <taxon>Bacteria</taxon>
        <taxon>Bacillati</taxon>
        <taxon>Actinomycetota</taxon>
        <taxon>Actinomycetes</taxon>
        <taxon>Bifidobacteriales</taxon>
        <taxon>Bifidobacteriaceae</taxon>
        <taxon>Bifidobacterium</taxon>
    </lineage>
</organism>
<evidence type="ECO:0000255" key="1">
    <source>
        <dbReference type="HAMAP-Rule" id="MF_00639"/>
    </source>
</evidence>
<name>MURD_BIFLD</name>
<comment type="function">
    <text evidence="1">Cell wall formation. Catalyzes the addition of glutamate to the nucleotide precursor UDP-N-acetylmuramoyl-L-alanine (UMA).</text>
</comment>
<comment type="catalytic activity">
    <reaction evidence="1">
        <text>UDP-N-acetyl-alpha-D-muramoyl-L-alanine + D-glutamate + ATP = UDP-N-acetyl-alpha-D-muramoyl-L-alanyl-D-glutamate + ADP + phosphate + H(+)</text>
        <dbReference type="Rhea" id="RHEA:16429"/>
        <dbReference type="ChEBI" id="CHEBI:15378"/>
        <dbReference type="ChEBI" id="CHEBI:29986"/>
        <dbReference type="ChEBI" id="CHEBI:30616"/>
        <dbReference type="ChEBI" id="CHEBI:43474"/>
        <dbReference type="ChEBI" id="CHEBI:83898"/>
        <dbReference type="ChEBI" id="CHEBI:83900"/>
        <dbReference type="ChEBI" id="CHEBI:456216"/>
        <dbReference type="EC" id="6.3.2.9"/>
    </reaction>
</comment>
<comment type="pathway">
    <text evidence="1">Cell wall biogenesis; peptidoglycan biosynthesis.</text>
</comment>
<comment type="subcellular location">
    <subcellularLocation>
        <location evidence="1">Cytoplasm</location>
    </subcellularLocation>
</comment>
<comment type="similarity">
    <text evidence="1">Belongs to the MurCDEF family.</text>
</comment>
<dbReference type="EC" id="6.3.2.9" evidence="1"/>
<dbReference type="EMBL" id="CP000605">
    <property type="protein sequence ID" value="ACD97625.1"/>
    <property type="molecule type" value="Genomic_DNA"/>
</dbReference>
<dbReference type="RefSeq" id="WP_007054400.1">
    <property type="nucleotide sequence ID" value="NZ_AABM02000003.1"/>
</dbReference>
<dbReference type="SMR" id="B3DQM9"/>
<dbReference type="GeneID" id="69578494"/>
<dbReference type="KEGG" id="blj:BLD_0179"/>
<dbReference type="HOGENOM" id="CLU_032540_0_0_11"/>
<dbReference type="UniPathway" id="UPA00219"/>
<dbReference type="Proteomes" id="UP000002419">
    <property type="component" value="Chromosome"/>
</dbReference>
<dbReference type="GO" id="GO:0005737">
    <property type="term" value="C:cytoplasm"/>
    <property type="evidence" value="ECO:0007669"/>
    <property type="project" value="UniProtKB-SubCell"/>
</dbReference>
<dbReference type="GO" id="GO:0005524">
    <property type="term" value="F:ATP binding"/>
    <property type="evidence" value="ECO:0007669"/>
    <property type="project" value="UniProtKB-UniRule"/>
</dbReference>
<dbReference type="GO" id="GO:0008764">
    <property type="term" value="F:UDP-N-acetylmuramoylalanine-D-glutamate ligase activity"/>
    <property type="evidence" value="ECO:0007669"/>
    <property type="project" value="UniProtKB-UniRule"/>
</dbReference>
<dbReference type="GO" id="GO:0051301">
    <property type="term" value="P:cell division"/>
    <property type="evidence" value="ECO:0007669"/>
    <property type="project" value="UniProtKB-KW"/>
</dbReference>
<dbReference type="GO" id="GO:0071555">
    <property type="term" value="P:cell wall organization"/>
    <property type="evidence" value="ECO:0007669"/>
    <property type="project" value="UniProtKB-KW"/>
</dbReference>
<dbReference type="GO" id="GO:0009252">
    <property type="term" value="P:peptidoglycan biosynthetic process"/>
    <property type="evidence" value="ECO:0007669"/>
    <property type="project" value="UniProtKB-UniRule"/>
</dbReference>
<dbReference type="GO" id="GO:0008360">
    <property type="term" value="P:regulation of cell shape"/>
    <property type="evidence" value="ECO:0007669"/>
    <property type="project" value="UniProtKB-KW"/>
</dbReference>
<dbReference type="Gene3D" id="3.90.190.20">
    <property type="entry name" value="Mur ligase, C-terminal domain"/>
    <property type="match status" value="1"/>
</dbReference>
<dbReference type="Gene3D" id="3.40.1190.10">
    <property type="entry name" value="Mur-like, catalytic domain"/>
    <property type="match status" value="1"/>
</dbReference>
<dbReference type="Gene3D" id="3.40.50.720">
    <property type="entry name" value="NAD(P)-binding Rossmann-like Domain"/>
    <property type="match status" value="1"/>
</dbReference>
<dbReference type="HAMAP" id="MF_00639">
    <property type="entry name" value="MurD"/>
    <property type="match status" value="1"/>
</dbReference>
<dbReference type="InterPro" id="IPR036565">
    <property type="entry name" value="Mur-like_cat_sf"/>
</dbReference>
<dbReference type="InterPro" id="IPR004101">
    <property type="entry name" value="Mur_ligase_C"/>
</dbReference>
<dbReference type="InterPro" id="IPR036615">
    <property type="entry name" value="Mur_ligase_C_dom_sf"/>
</dbReference>
<dbReference type="InterPro" id="IPR013221">
    <property type="entry name" value="Mur_ligase_cen"/>
</dbReference>
<dbReference type="InterPro" id="IPR005762">
    <property type="entry name" value="MurD"/>
</dbReference>
<dbReference type="NCBIfam" id="TIGR01087">
    <property type="entry name" value="murD"/>
    <property type="match status" value="1"/>
</dbReference>
<dbReference type="PANTHER" id="PTHR43692">
    <property type="entry name" value="UDP-N-ACETYLMURAMOYLALANINE--D-GLUTAMATE LIGASE"/>
    <property type="match status" value="1"/>
</dbReference>
<dbReference type="PANTHER" id="PTHR43692:SF1">
    <property type="entry name" value="UDP-N-ACETYLMURAMOYLALANINE--D-GLUTAMATE LIGASE"/>
    <property type="match status" value="1"/>
</dbReference>
<dbReference type="Pfam" id="PF02875">
    <property type="entry name" value="Mur_ligase_C"/>
    <property type="match status" value="1"/>
</dbReference>
<dbReference type="Pfam" id="PF08245">
    <property type="entry name" value="Mur_ligase_M"/>
    <property type="match status" value="1"/>
</dbReference>
<dbReference type="SUPFAM" id="SSF51984">
    <property type="entry name" value="MurCD N-terminal domain"/>
    <property type="match status" value="1"/>
</dbReference>
<dbReference type="SUPFAM" id="SSF53623">
    <property type="entry name" value="MurD-like peptide ligases, catalytic domain"/>
    <property type="match status" value="1"/>
</dbReference>
<dbReference type="SUPFAM" id="SSF53244">
    <property type="entry name" value="MurD-like peptide ligases, peptide-binding domain"/>
    <property type="match status" value="1"/>
</dbReference>
<accession>B3DQM9</accession>
<proteinExistence type="inferred from homology"/>
<keyword id="KW-0067">ATP-binding</keyword>
<keyword id="KW-0131">Cell cycle</keyword>
<keyword id="KW-0132">Cell division</keyword>
<keyword id="KW-0133">Cell shape</keyword>
<keyword id="KW-0961">Cell wall biogenesis/degradation</keyword>
<keyword id="KW-0963">Cytoplasm</keyword>
<keyword id="KW-0436">Ligase</keyword>
<keyword id="KW-0547">Nucleotide-binding</keyword>
<keyword id="KW-0573">Peptidoglycan synthesis</keyword>